<dbReference type="EMBL" id="CP000087">
    <property type="protein sequence ID" value="ABE05152.1"/>
    <property type="molecule type" value="Genomic_DNA"/>
</dbReference>
<dbReference type="RefSeq" id="WP_011477730.1">
    <property type="nucleotide sequence ID" value="NC_007940.1"/>
</dbReference>
<dbReference type="SMR" id="Q1RHL2"/>
<dbReference type="KEGG" id="rbe:RBE_1071"/>
<dbReference type="eggNOG" id="COG0206">
    <property type="taxonomic scope" value="Bacteria"/>
</dbReference>
<dbReference type="HOGENOM" id="CLU_024865_0_4_5"/>
<dbReference type="OrthoDB" id="9813375at2"/>
<dbReference type="Proteomes" id="UP000001951">
    <property type="component" value="Chromosome"/>
</dbReference>
<dbReference type="GO" id="GO:0032153">
    <property type="term" value="C:cell division site"/>
    <property type="evidence" value="ECO:0007669"/>
    <property type="project" value="UniProtKB-UniRule"/>
</dbReference>
<dbReference type="GO" id="GO:0005737">
    <property type="term" value="C:cytoplasm"/>
    <property type="evidence" value="ECO:0007669"/>
    <property type="project" value="UniProtKB-SubCell"/>
</dbReference>
<dbReference type="GO" id="GO:0005525">
    <property type="term" value="F:GTP binding"/>
    <property type="evidence" value="ECO:0007669"/>
    <property type="project" value="UniProtKB-UniRule"/>
</dbReference>
<dbReference type="GO" id="GO:0003924">
    <property type="term" value="F:GTPase activity"/>
    <property type="evidence" value="ECO:0007669"/>
    <property type="project" value="UniProtKB-UniRule"/>
</dbReference>
<dbReference type="GO" id="GO:0000917">
    <property type="term" value="P:division septum assembly"/>
    <property type="evidence" value="ECO:0007669"/>
    <property type="project" value="UniProtKB-KW"/>
</dbReference>
<dbReference type="GO" id="GO:0043093">
    <property type="term" value="P:FtsZ-dependent cytokinesis"/>
    <property type="evidence" value="ECO:0007669"/>
    <property type="project" value="UniProtKB-UniRule"/>
</dbReference>
<dbReference type="GO" id="GO:0051258">
    <property type="term" value="P:protein polymerization"/>
    <property type="evidence" value="ECO:0007669"/>
    <property type="project" value="UniProtKB-UniRule"/>
</dbReference>
<dbReference type="CDD" id="cd02201">
    <property type="entry name" value="FtsZ_type1"/>
    <property type="match status" value="1"/>
</dbReference>
<dbReference type="FunFam" id="3.30.1330.20:FF:000011">
    <property type="entry name" value="Cell division protein FtsZ"/>
    <property type="match status" value="1"/>
</dbReference>
<dbReference type="FunFam" id="3.40.50.1440:FF:000001">
    <property type="entry name" value="Cell division protein FtsZ"/>
    <property type="match status" value="1"/>
</dbReference>
<dbReference type="Gene3D" id="3.30.1330.20">
    <property type="entry name" value="Tubulin/FtsZ, C-terminal domain"/>
    <property type="match status" value="1"/>
</dbReference>
<dbReference type="Gene3D" id="3.40.50.1440">
    <property type="entry name" value="Tubulin/FtsZ, GTPase domain"/>
    <property type="match status" value="1"/>
</dbReference>
<dbReference type="HAMAP" id="MF_00909">
    <property type="entry name" value="FtsZ"/>
    <property type="match status" value="1"/>
</dbReference>
<dbReference type="InterPro" id="IPR000158">
    <property type="entry name" value="Cell_div_FtsZ"/>
</dbReference>
<dbReference type="InterPro" id="IPR020805">
    <property type="entry name" value="Cell_div_FtsZ_CS"/>
</dbReference>
<dbReference type="InterPro" id="IPR045061">
    <property type="entry name" value="FtsZ/CetZ"/>
</dbReference>
<dbReference type="InterPro" id="IPR024757">
    <property type="entry name" value="FtsZ_C"/>
</dbReference>
<dbReference type="InterPro" id="IPR008280">
    <property type="entry name" value="Tub_FtsZ_C"/>
</dbReference>
<dbReference type="InterPro" id="IPR037103">
    <property type="entry name" value="Tubulin/FtsZ-like_C"/>
</dbReference>
<dbReference type="InterPro" id="IPR018316">
    <property type="entry name" value="Tubulin/FtsZ_2-layer-sand-dom"/>
</dbReference>
<dbReference type="InterPro" id="IPR036525">
    <property type="entry name" value="Tubulin/FtsZ_GTPase_sf"/>
</dbReference>
<dbReference type="InterPro" id="IPR003008">
    <property type="entry name" value="Tubulin_FtsZ_GTPase"/>
</dbReference>
<dbReference type="NCBIfam" id="TIGR00065">
    <property type="entry name" value="ftsZ"/>
    <property type="match status" value="1"/>
</dbReference>
<dbReference type="PANTHER" id="PTHR30314">
    <property type="entry name" value="CELL DIVISION PROTEIN FTSZ-RELATED"/>
    <property type="match status" value="1"/>
</dbReference>
<dbReference type="PANTHER" id="PTHR30314:SF3">
    <property type="entry name" value="MITOCHONDRIAL DIVISION PROTEIN FSZA"/>
    <property type="match status" value="1"/>
</dbReference>
<dbReference type="Pfam" id="PF12327">
    <property type="entry name" value="FtsZ_C"/>
    <property type="match status" value="1"/>
</dbReference>
<dbReference type="Pfam" id="PF00091">
    <property type="entry name" value="Tubulin"/>
    <property type="match status" value="1"/>
</dbReference>
<dbReference type="PRINTS" id="PR00423">
    <property type="entry name" value="CELLDVISFTSZ"/>
</dbReference>
<dbReference type="SMART" id="SM00864">
    <property type="entry name" value="Tubulin"/>
    <property type="match status" value="1"/>
</dbReference>
<dbReference type="SMART" id="SM00865">
    <property type="entry name" value="Tubulin_C"/>
    <property type="match status" value="1"/>
</dbReference>
<dbReference type="SUPFAM" id="SSF55307">
    <property type="entry name" value="Tubulin C-terminal domain-like"/>
    <property type="match status" value="1"/>
</dbReference>
<dbReference type="SUPFAM" id="SSF52490">
    <property type="entry name" value="Tubulin nucleotide-binding domain-like"/>
    <property type="match status" value="1"/>
</dbReference>
<dbReference type="PROSITE" id="PS01134">
    <property type="entry name" value="FTSZ_1"/>
    <property type="match status" value="1"/>
</dbReference>
<dbReference type="PROSITE" id="PS01135">
    <property type="entry name" value="FTSZ_2"/>
    <property type="match status" value="1"/>
</dbReference>
<comment type="function">
    <text evidence="1">Essential cell division protein that forms a contractile ring structure (Z ring) at the future cell division site. The regulation of the ring assembly controls the timing and the location of cell division. One of the functions of the FtsZ ring is to recruit other cell division proteins to the septum to produce a new cell wall between the dividing cells. Binds GTP and shows GTPase activity.</text>
</comment>
<comment type="subunit">
    <text evidence="1">Homodimer. Polymerizes to form a dynamic ring structure in a strictly GTP-dependent manner. Interacts directly with several other division proteins.</text>
</comment>
<comment type="subcellular location">
    <subcellularLocation>
        <location evidence="1">Cytoplasm</location>
    </subcellularLocation>
    <text evidence="1">Assembles at midcell at the inner surface of the cytoplasmic membrane.</text>
</comment>
<comment type="similarity">
    <text evidence="1">Belongs to the FtsZ family.</text>
</comment>
<protein>
    <recommendedName>
        <fullName evidence="1">Cell division protein FtsZ</fullName>
    </recommendedName>
</protein>
<keyword id="KW-0131">Cell cycle</keyword>
<keyword id="KW-0132">Cell division</keyword>
<keyword id="KW-0963">Cytoplasm</keyword>
<keyword id="KW-0342">GTP-binding</keyword>
<keyword id="KW-0547">Nucleotide-binding</keyword>
<keyword id="KW-0717">Septation</keyword>
<reference key="1">
    <citation type="journal article" date="2006" name="PLoS Genet.">
        <title>Genome sequence of Rickettsia bellii illuminates the role of amoebae in gene exchanges between intracellular pathogens.</title>
        <authorList>
            <person name="Ogata H."/>
            <person name="La Scola B."/>
            <person name="Audic S."/>
            <person name="Renesto P."/>
            <person name="Blanc G."/>
            <person name="Robert C."/>
            <person name="Fournier P.-E."/>
            <person name="Claverie J.-M."/>
            <person name="Raoult D."/>
        </authorList>
    </citation>
    <scope>NUCLEOTIDE SEQUENCE [LARGE SCALE GENOMIC DNA]</scope>
    <source>
        <strain>RML369-C</strain>
    </source>
</reference>
<evidence type="ECO:0000255" key="1">
    <source>
        <dbReference type="HAMAP-Rule" id="MF_00909"/>
    </source>
</evidence>
<evidence type="ECO:0000256" key="2">
    <source>
        <dbReference type="SAM" id="MobiDB-lite"/>
    </source>
</evidence>
<proteinExistence type="inferred from homology"/>
<organism>
    <name type="scientific">Rickettsia bellii (strain RML369-C)</name>
    <dbReference type="NCBI Taxonomy" id="336407"/>
    <lineage>
        <taxon>Bacteria</taxon>
        <taxon>Pseudomonadati</taxon>
        <taxon>Pseudomonadota</taxon>
        <taxon>Alphaproteobacteria</taxon>
        <taxon>Rickettsiales</taxon>
        <taxon>Rickettsiaceae</taxon>
        <taxon>Rickettsieae</taxon>
        <taxon>Rickettsia</taxon>
        <taxon>belli group</taxon>
    </lineage>
</organism>
<sequence>MALINIKAPENIILKPHITVFGVGGAGSNAVNNMIGANLQGANFVVANTDAQSLEYSRCENKIQLGVSTTRGLGAGAAPEVGAAAAQESENEIRNYLENSNMVFITAGMGGGTGTGSAPVIARIAKELGILTVGVVTKPFHFEGGHRMKTADKGIIDLQQFVDTLIVIPNQNLFRIANEQTTFADAFKMADDVLHAGVRGVTDLMIMPGLINLDFADIKAVMSEMGKAMMGTGEASGEDRATKAAESAISNPLLDHSSMCGARGVLINITGGPDMTLFEVDNAANRIREEVNNKDANIIFGSTFNPELKGIIRVSVVATGIDADKIPLYKPVNSSATDLSIEEDEDTKLRAQSTQGDQPVHIEEIPNFNSYSNDEAEIADSLDQAPNSTNDDMEPRVSLTNDAGETPKSSFFVRMWGSLRTQNNNQIPERKNVVVGMPDEETKESDIHDIPAFLRKKRD</sequence>
<accession>Q1RHL2</accession>
<name>FTSZ_RICBR</name>
<gene>
    <name evidence="1" type="primary">ftsZ</name>
    <name type="ordered locus">RBE_1071</name>
</gene>
<feature type="chain" id="PRO_0000280973" description="Cell division protein FtsZ">
    <location>
        <begin position="1"/>
        <end position="459"/>
    </location>
</feature>
<feature type="region of interest" description="Disordered" evidence="2">
    <location>
        <begin position="383"/>
        <end position="405"/>
    </location>
</feature>
<feature type="region of interest" description="Disordered" evidence="2">
    <location>
        <begin position="427"/>
        <end position="459"/>
    </location>
</feature>
<feature type="binding site" evidence="1">
    <location>
        <begin position="25"/>
        <end position="29"/>
    </location>
    <ligand>
        <name>GTP</name>
        <dbReference type="ChEBI" id="CHEBI:37565"/>
    </ligand>
</feature>
<feature type="binding site" evidence="1">
    <location>
        <begin position="112"/>
        <end position="114"/>
    </location>
    <ligand>
        <name>GTP</name>
        <dbReference type="ChEBI" id="CHEBI:37565"/>
    </ligand>
</feature>
<feature type="binding site" evidence="1">
    <location>
        <position position="143"/>
    </location>
    <ligand>
        <name>GTP</name>
        <dbReference type="ChEBI" id="CHEBI:37565"/>
    </ligand>
</feature>
<feature type="binding site" evidence="1">
    <location>
        <position position="147"/>
    </location>
    <ligand>
        <name>GTP</name>
        <dbReference type="ChEBI" id="CHEBI:37565"/>
    </ligand>
</feature>
<feature type="binding site" evidence="1">
    <location>
        <position position="191"/>
    </location>
    <ligand>
        <name>GTP</name>
        <dbReference type="ChEBI" id="CHEBI:37565"/>
    </ligand>
</feature>